<sequence>MQRLQICVYIYLFVLIVAGPVDLSENSEQKENVEKEGLCNACTWRQNTKSSRIEAIKIQILSKLRLETAPNISRDAVRQLLPRAPPLRELIDQYDVQRDDSSDGSLEDDDYHATTETVIAMPAETDLLMQVEGKPKCCFFKFSSKIQYNKVVKAQLWIYLRPVKTPTTVFVQILRLIKPMKDGTRYTGIRSPKLDMNPGTGIWQSIDVKTVLQNWLKQPESNLGIEIKALDENGHDLAVTFPGPGEDGLNPFLEVKVTDTPKRSRRDFGLDCDEHSTESRCRRYPLTVDFEAFGWDWIIAPKRYKANYCSGECEFVFLQKYPHTHLVHQANPRGSAGPCCTPTKMSPINMLYFNGKEQIIYGKIPAMVVDRCGCS</sequence>
<keyword id="KW-0165">Cleavage on pair of basic residues</keyword>
<keyword id="KW-0202">Cytokine</keyword>
<keyword id="KW-1015">Disulfide bond</keyword>
<keyword id="KW-0325">Glycoprotein</keyword>
<keyword id="KW-0339">Growth factor</keyword>
<keyword id="KW-0358">Heparin-binding</keyword>
<keyword id="KW-1185">Reference proteome</keyword>
<keyword id="KW-0964">Secreted</keyword>
<keyword id="KW-0732">Signal</keyword>
<evidence type="ECO:0000250" key="1">
    <source>
        <dbReference type="UniProtKB" id="O08689"/>
    </source>
</evidence>
<evidence type="ECO:0000250" key="2">
    <source>
        <dbReference type="UniProtKB" id="O14793"/>
    </source>
</evidence>
<evidence type="ECO:0000255" key="3"/>
<evidence type="ECO:0000305" key="4"/>
<comment type="function">
    <text evidence="1">Acts specifically as a negative regulator of skeletal muscle growth.</text>
</comment>
<comment type="subunit">
    <text evidence="1">Homodimer; disulfide-linked. Interacts with WFIKKN2, leading to inhibit its activity. Interacts with FSTL3.</text>
</comment>
<comment type="subcellular location">
    <subcellularLocation>
        <location evidence="1">Secreted</location>
    </subcellularLocation>
</comment>
<comment type="PTM">
    <text evidence="1">Synthesized as large precursor molecule that undergoes proteolytic cleavage to generate an N-terminal propeptide and a disulfide linked C-terminal dimer, which is the biologically active molecule. The circulating form consists of a latent complex of the C-terminal dimer and other proteins, including its propeptide, which maintain the C-terminal dimer in a latent, inactive state. Ligand activation requires additional cleavage of the prodomain by a tolloid-like metalloproteinase.</text>
</comment>
<comment type="similarity">
    <text evidence="4">Belongs to the TGF-beta family.</text>
</comment>
<organism>
    <name type="scientific">Vulpes vulpes</name>
    <name type="common">Red fox</name>
    <dbReference type="NCBI Taxonomy" id="9627"/>
    <lineage>
        <taxon>Eukaryota</taxon>
        <taxon>Metazoa</taxon>
        <taxon>Chordata</taxon>
        <taxon>Craniata</taxon>
        <taxon>Vertebrata</taxon>
        <taxon>Euteleostomi</taxon>
        <taxon>Mammalia</taxon>
        <taxon>Eutheria</taxon>
        <taxon>Laurasiatheria</taxon>
        <taxon>Carnivora</taxon>
        <taxon>Caniformia</taxon>
        <taxon>Canidae</taxon>
        <taxon>Vulpes</taxon>
    </lineage>
</organism>
<reference key="1">
    <citation type="submission" date="2004-06" db="EMBL/GenBank/DDBJ databases">
        <title>Cloning and sequence analysis of Gdf8 gene cDNA in silver fox.</title>
        <authorList>
            <person name="Liu Y."/>
            <person name="Bai S."/>
            <person name="Li H."/>
        </authorList>
    </citation>
    <scope>NUCLEOTIDE SEQUENCE [MRNA]</scope>
</reference>
<accession>Q6DTL9</accession>
<name>GDF8_VULVU</name>
<dbReference type="EMBL" id="AY647144">
    <property type="protein sequence ID" value="AAT67171.1"/>
    <property type="molecule type" value="mRNA"/>
</dbReference>
<dbReference type="SMR" id="Q6DTL9"/>
<dbReference type="STRING" id="9627.ENSVVUP00000038161"/>
<dbReference type="GlyCosmos" id="Q6DTL9">
    <property type="glycosylation" value="1 site, No reported glycans"/>
</dbReference>
<dbReference type="Proteomes" id="UP000286640">
    <property type="component" value="Unplaced"/>
</dbReference>
<dbReference type="GO" id="GO:0005615">
    <property type="term" value="C:extracellular space"/>
    <property type="evidence" value="ECO:0007669"/>
    <property type="project" value="UniProtKB-KW"/>
</dbReference>
<dbReference type="GO" id="GO:0005125">
    <property type="term" value="F:cytokine activity"/>
    <property type="evidence" value="ECO:0007669"/>
    <property type="project" value="UniProtKB-KW"/>
</dbReference>
<dbReference type="GO" id="GO:0008083">
    <property type="term" value="F:growth factor activity"/>
    <property type="evidence" value="ECO:0007669"/>
    <property type="project" value="UniProtKB-KW"/>
</dbReference>
<dbReference type="GO" id="GO:0008201">
    <property type="term" value="F:heparin binding"/>
    <property type="evidence" value="ECO:0007669"/>
    <property type="project" value="UniProtKB-KW"/>
</dbReference>
<dbReference type="GO" id="GO:0042802">
    <property type="term" value="F:identical protein binding"/>
    <property type="evidence" value="ECO:0000250"/>
    <property type="project" value="UniProtKB"/>
</dbReference>
<dbReference type="GO" id="GO:0014839">
    <property type="term" value="P:myoblast migration involved in skeletal muscle regeneration"/>
    <property type="evidence" value="ECO:0000250"/>
    <property type="project" value="UniProtKB"/>
</dbReference>
<dbReference type="GO" id="GO:2000818">
    <property type="term" value="P:negative regulation of myoblast proliferation"/>
    <property type="evidence" value="ECO:0000250"/>
    <property type="project" value="AgBase"/>
</dbReference>
<dbReference type="GO" id="GO:1902725">
    <property type="term" value="P:negative regulation of satellite cell differentiation"/>
    <property type="evidence" value="ECO:0000250"/>
    <property type="project" value="AgBase"/>
</dbReference>
<dbReference type="GO" id="GO:1902723">
    <property type="term" value="P:negative regulation of skeletal muscle satellite cell proliferation"/>
    <property type="evidence" value="ECO:0000250"/>
    <property type="project" value="AgBase"/>
</dbReference>
<dbReference type="GO" id="GO:0010592">
    <property type="term" value="P:positive regulation of lamellipodium assembly"/>
    <property type="evidence" value="ECO:0000250"/>
    <property type="project" value="UniProtKB"/>
</dbReference>
<dbReference type="GO" id="GO:0010759">
    <property type="term" value="P:positive regulation of macrophage chemotaxis"/>
    <property type="evidence" value="ECO:0000250"/>
    <property type="project" value="UniProtKB"/>
</dbReference>
<dbReference type="CDD" id="cd19388">
    <property type="entry name" value="TGF_beta_GDF8"/>
    <property type="match status" value="1"/>
</dbReference>
<dbReference type="FunFam" id="2.60.120.970:FF:000001">
    <property type="entry name" value="Growth/differentiation factor 8"/>
    <property type="match status" value="1"/>
</dbReference>
<dbReference type="FunFam" id="2.10.90.10:FF:000006">
    <property type="entry name" value="growth/differentiation factor 8"/>
    <property type="match status" value="1"/>
</dbReference>
<dbReference type="Gene3D" id="2.60.120.970">
    <property type="match status" value="1"/>
</dbReference>
<dbReference type="Gene3D" id="2.10.90.10">
    <property type="entry name" value="Cystine-knot cytokines"/>
    <property type="match status" value="1"/>
</dbReference>
<dbReference type="InterPro" id="IPR029034">
    <property type="entry name" value="Cystine-knot_cytokine"/>
</dbReference>
<dbReference type="InterPro" id="IPR001839">
    <property type="entry name" value="TGF-b_C"/>
</dbReference>
<dbReference type="InterPro" id="IPR001111">
    <property type="entry name" value="TGF-b_propeptide"/>
</dbReference>
<dbReference type="InterPro" id="IPR015615">
    <property type="entry name" value="TGF-beta-rel"/>
</dbReference>
<dbReference type="InterPro" id="IPR017948">
    <property type="entry name" value="TGFb_CS"/>
</dbReference>
<dbReference type="PANTHER" id="PTHR11848:SF150">
    <property type="entry name" value="GROWTH_DIFFERENTIATION FACTOR 8"/>
    <property type="match status" value="1"/>
</dbReference>
<dbReference type="PANTHER" id="PTHR11848">
    <property type="entry name" value="TGF-BETA FAMILY"/>
    <property type="match status" value="1"/>
</dbReference>
<dbReference type="Pfam" id="PF00019">
    <property type="entry name" value="TGF_beta"/>
    <property type="match status" value="1"/>
</dbReference>
<dbReference type="Pfam" id="PF00688">
    <property type="entry name" value="TGFb_propeptide"/>
    <property type="match status" value="1"/>
</dbReference>
<dbReference type="SMART" id="SM00204">
    <property type="entry name" value="TGFB"/>
    <property type="match status" value="1"/>
</dbReference>
<dbReference type="SUPFAM" id="SSF57501">
    <property type="entry name" value="Cystine-knot cytokines"/>
    <property type="match status" value="1"/>
</dbReference>
<dbReference type="PROSITE" id="PS00250">
    <property type="entry name" value="TGF_BETA_1"/>
    <property type="match status" value="1"/>
</dbReference>
<dbReference type="PROSITE" id="PS51362">
    <property type="entry name" value="TGF_BETA_2"/>
    <property type="match status" value="1"/>
</dbReference>
<gene>
    <name type="primary">MSTN</name>
    <name type="synonym">GDF8</name>
</gene>
<protein>
    <recommendedName>
        <fullName>Growth/differentiation factor 8</fullName>
        <shortName>GDF-8</shortName>
    </recommendedName>
    <alternativeName>
        <fullName>Myostatin</fullName>
    </alternativeName>
</protein>
<proteinExistence type="evidence at transcript level"/>
<feature type="signal peptide" evidence="3">
    <location>
        <begin position="1"/>
        <end position="18"/>
    </location>
</feature>
<feature type="propeptide" id="PRO_0000033970" evidence="3">
    <location>
        <begin position="19"/>
        <end position="266"/>
    </location>
</feature>
<feature type="chain" id="PRO_0000033971" description="Growth/differentiation factor 8">
    <location>
        <begin position="267"/>
        <end position="375"/>
    </location>
</feature>
<feature type="site" description="Cleavage" evidence="1">
    <location>
        <begin position="98"/>
        <end position="99"/>
    </location>
</feature>
<feature type="glycosylation site" description="N-linked (GlcNAc...) asparagine" evidence="3">
    <location>
        <position position="71"/>
    </location>
</feature>
<feature type="disulfide bond" evidence="2">
    <location>
        <begin position="281"/>
        <end position="340"/>
    </location>
</feature>
<feature type="disulfide bond" evidence="2">
    <location>
        <begin position="309"/>
        <end position="372"/>
    </location>
</feature>
<feature type="disulfide bond" evidence="2">
    <location>
        <begin position="313"/>
        <end position="374"/>
    </location>
</feature>
<feature type="disulfide bond" description="Interchain" evidence="2">
    <location>
        <position position="339"/>
    </location>
</feature>